<gene>
    <name type="primary">hemB</name>
    <name type="ordered locus">SACOL1715</name>
</gene>
<evidence type="ECO:0000250" key="1"/>
<evidence type="ECO:0000305" key="2"/>
<protein>
    <recommendedName>
        <fullName>Delta-aminolevulinic acid dehydratase</fullName>
        <shortName>ALAD</shortName>
        <shortName>ALADH</shortName>
        <ecNumber>4.2.1.24</ecNumber>
    </recommendedName>
    <alternativeName>
        <fullName>Porphobilinogen synthase</fullName>
    </alternativeName>
</protein>
<organism>
    <name type="scientific">Staphylococcus aureus (strain COL)</name>
    <dbReference type="NCBI Taxonomy" id="93062"/>
    <lineage>
        <taxon>Bacteria</taxon>
        <taxon>Bacillati</taxon>
        <taxon>Bacillota</taxon>
        <taxon>Bacilli</taxon>
        <taxon>Bacillales</taxon>
        <taxon>Staphylococcaceae</taxon>
        <taxon>Staphylococcus</taxon>
    </lineage>
</organism>
<dbReference type="EC" id="4.2.1.24"/>
<dbReference type="EMBL" id="CP000046">
    <property type="protein sequence ID" value="AAW36820.1"/>
    <property type="molecule type" value="Genomic_DNA"/>
</dbReference>
<dbReference type="RefSeq" id="WP_000667126.1">
    <property type="nucleotide sequence ID" value="NZ_JBGOFO010000003.1"/>
</dbReference>
<dbReference type="SMR" id="Q5HFA4"/>
<dbReference type="KEGG" id="sac:SACOL1715"/>
<dbReference type="HOGENOM" id="CLU_035731_0_0_9"/>
<dbReference type="UniPathway" id="UPA00251">
    <property type="reaction ID" value="UER00318"/>
</dbReference>
<dbReference type="Proteomes" id="UP000000530">
    <property type="component" value="Chromosome"/>
</dbReference>
<dbReference type="GO" id="GO:0005829">
    <property type="term" value="C:cytosol"/>
    <property type="evidence" value="ECO:0007669"/>
    <property type="project" value="TreeGrafter"/>
</dbReference>
<dbReference type="GO" id="GO:0004655">
    <property type="term" value="F:porphobilinogen synthase activity"/>
    <property type="evidence" value="ECO:0007669"/>
    <property type="project" value="UniProtKB-EC"/>
</dbReference>
<dbReference type="GO" id="GO:0008270">
    <property type="term" value="F:zinc ion binding"/>
    <property type="evidence" value="ECO:0007669"/>
    <property type="project" value="TreeGrafter"/>
</dbReference>
<dbReference type="GO" id="GO:0006782">
    <property type="term" value="P:protoporphyrinogen IX biosynthetic process"/>
    <property type="evidence" value="ECO:0007669"/>
    <property type="project" value="UniProtKB-UniPathway"/>
</dbReference>
<dbReference type="CDD" id="cd00384">
    <property type="entry name" value="ALAD_PBGS"/>
    <property type="match status" value="1"/>
</dbReference>
<dbReference type="FunFam" id="3.20.20.70:FF:000019">
    <property type="entry name" value="Delta-aminolevulinic acid dehydratase"/>
    <property type="match status" value="1"/>
</dbReference>
<dbReference type="Gene3D" id="3.20.20.70">
    <property type="entry name" value="Aldolase class I"/>
    <property type="match status" value="1"/>
</dbReference>
<dbReference type="InterPro" id="IPR001731">
    <property type="entry name" value="ALAD"/>
</dbReference>
<dbReference type="InterPro" id="IPR030656">
    <property type="entry name" value="ALAD_AS"/>
</dbReference>
<dbReference type="InterPro" id="IPR013785">
    <property type="entry name" value="Aldolase_TIM"/>
</dbReference>
<dbReference type="NCBIfam" id="NF006762">
    <property type="entry name" value="PRK09283.1"/>
    <property type="match status" value="1"/>
</dbReference>
<dbReference type="PANTHER" id="PTHR11458">
    <property type="entry name" value="DELTA-AMINOLEVULINIC ACID DEHYDRATASE"/>
    <property type="match status" value="1"/>
</dbReference>
<dbReference type="PANTHER" id="PTHR11458:SF0">
    <property type="entry name" value="DELTA-AMINOLEVULINIC ACID DEHYDRATASE"/>
    <property type="match status" value="1"/>
</dbReference>
<dbReference type="Pfam" id="PF00490">
    <property type="entry name" value="ALAD"/>
    <property type="match status" value="1"/>
</dbReference>
<dbReference type="PIRSF" id="PIRSF001415">
    <property type="entry name" value="Porphbilin_synth"/>
    <property type="match status" value="1"/>
</dbReference>
<dbReference type="PRINTS" id="PR00144">
    <property type="entry name" value="DALDHYDRTASE"/>
</dbReference>
<dbReference type="SMART" id="SM01004">
    <property type="entry name" value="ALAD"/>
    <property type="match status" value="1"/>
</dbReference>
<dbReference type="SUPFAM" id="SSF51569">
    <property type="entry name" value="Aldolase"/>
    <property type="match status" value="1"/>
</dbReference>
<dbReference type="PROSITE" id="PS00169">
    <property type="entry name" value="D_ALA_DEHYDRATASE"/>
    <property type="match status" value="1"/>
</dbReference>
<reference key="1">
    <citation type="journal article" date="2005" name="J. Bacteriol.">
        <title>Insights on evolution of virulence and resistance from the complete genome analysis of an early methicillin-resistant Staphylococcus aureus strain and a biofilm-producing methicillin-resistant Staphylococcus epidermidis strain.</title>
        <authorList>
            <person name="Gill S.R."/>
            <person name="Fouts D.E."/>
            <person name="Archer G.L."/>
            <person name="Mongodin E.F."/>
            <person name="DeBoy R.T."/>
            <person name="Ravel J."/>
            <person name="Paulsen I.T."/>
            <person name="Kolonay J.F."/>
            <person name="Brinkac L.M."/>
            <person name="Beanan M.J."/>
            <person name="Dodson R.J."/>
            <person name="Daugherty S.C."/>
            <person name="Madupu R."/>
            <person name="Angiuoli S.V."/>
            <person name="Durkin A.S."/>
            <person name="Haft D.H."/>
            <person name="Vamathevan J.J."/>
            <person name="Khouri H."/>
            <person name="Utterback T.R."/>
            <person name="Lee C."/>
            <person name="Dimitrov G."/>
            <person name="Jiang L."/>
            <person name="Qin H."/>
            <person name="Weidman J."/>
            <person name="Tran K."/>
            <person name="Kang K.H."/>
            <person name="Hance I.R."/>
            <person name="Nelson K.E."/>
            <person name="Fraser C.M."/>
        </authorList>
    </citation>
    <scope>NUCLEOTIDE SEQUENCE [LARGE SCALE GENOMIC DNA]</scope>
    <source>
        <strain>COL</strain>
    </source>
</reference>
<proteinExistence type="inferred from homology"/>
<keyword id="KW-0350">Heme biosynthesis</keyword>
<keyword id="KW-0456">Lyase</keyword>
<keyword id="KW-0460">Magnesium</keyword>
<keyword id="KW-0479">Metal-binding</keyword>
<keyword id="KW-0627">Porphyrin biosynthesis</keyword>
<keyword id="KW-0862">Zinc</keyword>
<sequence>MKFDRHRRLRSSATMRDMVRENHVRKEDLIYPIFVVEKDDVKKEIKSLPGVYQISLNLLESELKEAYDLGIRAIMFFGVPNSKDDIGTGAYIHDGVIQQATRIAKKMYDDLLIVADTCLCEYTDHGHCGVIDDHTHDVDNDKSLPLLVKTAISQVEAGADIIAPSNMMDGFVAEIRRGLDEAGYYNIPIMSYGVKYASSFFGPFRDAADSAPSFGDRKTYQMDPANRLEALRELESDLKEGCDMMIVKPALSYLDIVRDVKNHTNVPVVAYNVSGEYSMTKAAAQNGWIDEERVVMEQMVSMKRAGADMIITYFAKDICRYLDK</sequence>
<name>HEM2_STAAC</name>
<feature type="chain" id="PRO_0000140510" description="Delta-aminolevulinic acid dehydratase">
    <location>
        <begin position="1"/>
        <end position="324"/>
    </location>
</feature>
<feature type="active site" description="Schiff-base intermediate with substrate" evidence="1">
    <location>
        <position position="195"/>
    </location>
</feature>
<feature type="active site" description="Schiff-base intermediate with substrate" evidence="1">
    <location>
        <position position="248"/>
    </location>
</feature>
<feature type="binding site" evidence="1">
    <location>
        <position position="118"/>
    </location>
    <ligand>
        <name>Zn(2+)</name>
        <dbReference type="ChEBI" id="CHEBI:29105"/>
        <note>catalytic</note>
    </ligand>
</feature>
<feature type="binding site" evidence="1">
    <location>
        <position position="120"/>
    </location>
    <ligand>
        <name>Zn(2+)</name>
        <dbReference type="ChEBI" id="CHEBI:29105"/>
        <note>catalytic</note>
    </ligand>
</feature>
<feature type="binding site" evidence="1">
    <location>
        <position position="128"/>
    </location>
    <ligand>
        <name>Zn(2+)</name>
        <dbReference type="ChEBI" id="CHEBI:29105"/>
        <note>catalytic</note>
    </ligand>
</feature>
<feature type="binding site" evidence="1">
    <location>
        <position position="205"/>
    </location>
    <ligand>
        <name>5-aminolevulinate</name>
        <dbReference type="ChEBI" id="CHEBI:356416"/>
        <label>1</label>
    </ligand>
</feature>
<feature type="binding site" evidence="1">
    <location>
        <position position="217"/>
    </location>
    <ligand>
        <name>5-aminolevulinate</name>
        <dbReference type="ChEBI" id="CHEBI:356416"/>
        <label>1</label>
    </ligand>
</feature>
<feature type="binding site" evidence="1">
    <location>
        <position position="233"/>
    </location>
    <ligand>
        <name>Mg(2+)</name>
        <dbReference type="ChEBI" id="CHEBI:18420"/>
    </ligand>
</feature>
<feature type="binding site" evidence="1">
    <location>
        <position position="274"/>
    </location>
    <ligand>
        <name>5-aminolevulinate</name>
        <dbReference type="ChEBI" id="CHEBI:356416"/>
        <label>2</label>
    </ligand>
</feature>
<feature type="binding site" evidence="1">
    <location>
        <position position="313"/>
    </location>
    <ligand>
        <name>5-aminolevulinate</name>
        <dbReference type="ChEBI" id="CHEBI:356416"/>
        <label>2</label>
    </ligand>
</feature>
<accession>Q5HFA4</accession>
<comment type="function">
    <text evidence="1">Catalyzes an early step in the biosynthesis of tetrapyrroles. Binds two molecules of 5-aminolevulinate per subunit, each at a distinct site, and catalyzes their condensation to form porphobilinogen (By similarity).</text>
</comment>
<comment type="catalytic activity">
    <reaction>
        <text>2 5-aminolevulinate = porphobilinogen + 2 H2O + H(+)</text>
        <dbReference type="Rhea" id="RHEA:24064"/>
        <dbReference type="ChEBI" id="CHEBI:15377"/>
        <dbReference type="ChEBI" id="CHEBI:15378"/>
        <dbReference type="ChEBI" id="CHEBI:58126"/>
        <dbReference type="ChEBI" id="CHEBI:356416"/>
        <dbReference type="EC" id="4.2.1.24"/>
    </reaction>
</comment>
<comment type="cofactor">
    <cofactor evidence="1">
        <name>Zn(2+)</name>
        <dbReference type="ChEBI" id="CHEBI:29105"/>
    </cofactor>
    <text evidence="1">Binds 1 zinc ion per monomer.</text>
</comment>
<comment type="pathway">
    <text>Porphyrin-containing compound metabolism; protoporphyrin-IX biosynthesis; coproporphyrinogen-III from 5-aminolevulinate: step 1/4.</text>
</comment>
<comment type="subunit">
    <text evidence="1">Homooctamer.</text>
</comment>
<comment type="similarity">
    <text evidence="2">Belongs to the ALAD family.</text>
</comment>